<accession>P17593</accession>
<evidence type="ECO:0000250" key="1"/>
<evidence type="ECO:0000250" key="2">
    <source>
        <dbReference type="UniProtKB" id="P03300"/>
    </source>
</evidence>
<evidence type="ECO:0000250" key="3">
    <source>
        <dbReference type="UniProtKB" id="P03304"/>
    </source>
</evidence>
<evidence type="ECO:0000250" key="4">
    <source>
        <dbReference type="UniProtKB" id="P03305"/>
    </source>
</evidence>
<evidence type="ECO:0000250" key="5">
    <source>
        <dbReference type="UniProtKB" id="P08545"/>
    </source>
</evidence>
<evidence type="ECO:0000250" key="6">
    <source>
        <dbReference type="UniProtKB" id="P08617"/>
    </source>
</evidence>
<evidence type="ECO:0000250" key="7">
    <source>
        <dbReference type="UniProtKB" id="P12296"/>
    </source>
</evidence>
<evidence type="ECO:0000250" key="8">
    <source>
        <dbReference type="UniProtKB" id="Q66282"/>
    </source>
</evidence>
<evidence type="ECO:0000250" key="9">
    <source>
        <dbReference type="UniProtKB" id="Q66765"/>
    </source>
</evidence>
<evidence type="ECO:0000255" key="10"/>
<evidence type="ECO:0000255" key="11">
    <source>
        <dbReference type="PROSITE-ProRule" id="PRU00539"/>
    </source>
</evidence>
<evidence type="ECO:0000255" key="12">
    <source>
        <dbReference type="PROSITE-ProRule" id="PRU00551"/>
    </source>
</evidence>
<evidence type="ECO:0000255" key="13">
    <source>
        <dbReference type="PROSITE-ProRule" id="PRU01222"/>
    </source>
</evidence>
<evidence type="ECO:0000305" key="14"/>
<protein>
    <recommendedName>
        <fullName>Genome polyprotein</fullName>
    </recommendedName>
    <component>
        <recommendedName>
            <fullName>Leader protein</fullName>
            <shortName>L</shortName>
        </recommendedName>
    </component>
    <component>
        <recommendedName>
            <fullName>Capsid protein VP0</fullName>
        </recommendedName>
        <alternativeName>
            <fullName>VP4-VP2</fullName>
        </alternativeName>
    </component>
    <component>
        <recommendedName>
            <fullName>Capsid protein VP4</fullName>
        </recommendedName>
        <alternativeName>
            <fullName>P1A</fullName>
        </alternativeName>
        <alternativeName>
            <fullName>Rho</fullName>
        </alternativeName>
        <alternativeName>
            <fullName>Virion protein 4</fullName>
        </alternativeName>
    </component>
    <component>
        <recommendedName>
            <fullName>Capsid protein VP2</fullName>
        </recommendedName>
        <alternativeName>
            <fullName>Beta</fullName>
        </alternativeName>
        <alternativeName>
            <fullName>P1B</fullName>
        </alternativeName>
        <alternativeName>
            <fullName>Virion protein 2</fullName>
        </alternativeName>
    </component>
    <component>
        <recommendedName>
            <fullName>Capsid protein VP3</fullName>
        </recommendedName>
        <alternativeName>
            <fullName>Gamma</fullName>
        </alternativeName>
        <alternativeName>
            <fullName>P1C</fullName>
        </alternativeName>
        <alternativeName>
            <fullName>Virion protein 3</fullName>
        </alternativeName>
    </component>
    <component>
        <recommendedName>
            <fullName>Capsid protein VP1</fullName>
        </recommendedName>
        <alternativeName>
            <fullName>Alpha</fullName>
        </alternativeName>
        <alternativeName>
            <fullName>P1D</fullName>
        </alternativeName>
        <alternativeName>
            <fullName>Virion protein 1</fullName>
        </alternativeName>
    </component>
    <component>
        <recommendedName>
            <fullName>Protein 2A</fullName>
            <shortName>P2A</shortName>
        </recommendedName>
        <alternativeName>
            <fullName>G</fullName>
        </alternativeName>
    </component>
    <component>
        <recommendedName>
            <fullName>Protein 2B</fullName>
            <shortName>I</shortName>
            <shortName>P2B</shortName>
        </recommendedName>
    </component>
    <component>
        <recommendedName>
            <fullName>Protein 2C</fullName>
            <shortName>C</shortName>
            <shortName>P2C</shortName>
            <ecNumber>3.6.4.13</ecNumber>
        </recommendedName>
    </component>
    <component>
        <recommendedName>
            <fullName>Protein 3A</fullName>
            <shortName>P3A</shortName>
        </recommendedName>
    </component>
    <component>
        <recommendedName>
            <fullName>VPg</fullName>
            <shortName>P3B</shortName>
        </recommendedName>
        <alternativeName>
            <fullName>H</fullName>
        </alternativeName>
        <alternativeName>
            <fullName>Protein 3B</fullName>
        </alternativeName>
    </component>
    <component>
        <recommendedName>
            <fullName>Protease 3C</fullName>
            <shortName>P3C</shortName>
            <ecNumber evidence="7">3.4.22.28</ecNumber>
        </recommendedName>
        <alternativeName>
            <fullName>Picornain 3C</fullName>
        </alternativeName>
        <alternativeName>
            <fullName>p22</fullName>
        </alternativeName>
    </component>
    <component>
        <recommendedName>
            <fullName>RNA-directed RNA polymerase</fullName>
            <shortName>RdRp</shortName>
            <ecNumber evidence="11">2.7.7.48</ecNumber>
        </recommendedName>
        <alternativeName>
            <fullName>3D polymerase</fullName>
            <shortName>3Dpol</shortName>
        </alternativeName>
        <alternativeName>
            <fullName>E</fullName>
        </alternativeName>
        <alternativeName>
            <fullName>Protein 3D</fullName>
            <shortName>3D</shortName>
        </alternativeName>
    </component>
</protein>
<reference key="1">
    <citation type="journal article" date="1989" name="Virology">
        <title>Genomic differences between the diabetogenic and nondiabetogenic variants of encephalomyocarditis virus.</title>
        <authorList>
            <person name="Bae Y.S."/>
            <person name="Eun H.M."/>
            <person name="Yoon J.W."/>
        </authorList>
    </citation>
    <scope>NUCLEOTIDE SEQUENCE [GENOMIC RNA]</scope>
</reference>
<reference key="2">
    <citation type="journal article" date="1989" name="Diabetes">
        <title>Molecular identification of diabetogenic viral gene.</title>
        <authorList>
            <person name="Bae Y.S."/>
            <person name="Eun H.M."/>
            <person name="Yoon J.W."/>
        </authorList>
    </citation>
    <scope>NUCLEOTIDE SEQUENCE [GENOMIC RNA]</scope>
</reference>
<keyword id="KW-0067">ATP-binding</keyword>
<keyword id="KW-0167">Capsid protein</keyword>
<keyword id="KW-0191">Covalent protein-RNA linkage</keyword>
<keyword id="KW-1262">Eukaryotic host gene expression shutoff by virus</keyword>
<keyword id="KW-1193">Eukaryotic host translation shutoff by virus</keyword>
<keyword id="KW-0347">Helicase</keyword>
<keyword id="KW-1035">Host cytoplasm</keyword>
<keyword id="KW-1036">Host cytoplasmic vesicle</keyword>
<keyword id="KW-1190">Host gene expression shutoff by virus</keyword>
<keyword id="KW-1043">Host membrane</keyword>
<keyword id="KW-1192">Host mRNA suppression by virus</keyword>
<keyword id="KW-1048">Host nucleus</keyword>
<keyword id="KW-0945">Host-virus interaction</keyword>
<keyword id="KW-0378">Hydrolase</keyword>
<keyword id="KW-1090">Inhibition of host innate immune response by virus</keyword>
<keyword id="KW-1099">Inhibition of host mRNA nuclear export by virus</keyword>
<keyword id="KW-1088">Inhibition of host RIG-I by virus</keyword>
<keyword id="KW-1113">Inhibition of host RLR pathway by virus</keyword>
<keyword id="KW-0407">Ion channel</keyword>
<keyword id="KW-0406">Ion transport</keyword>
<keyword id="KW-0449">Lipoprotein</keyword>
<keyword id="KW-0472">Membrane</keyword>
<keyword id="KW-0479">Metal-binding</keyword>
<keyword id="KW-0519">Myristate</keyword>
<keyword id="KW-0547">Nucleotide-binding</keyword>
<keyword id="KW-0548">Nucleotidyltransferase</keyword>
<keyword id="KW-0597">Phosphoprotein</keyword>
<keyword id="KW-0645">Protease</keyword>
<keyword id="KW-0694">RNA-binding</keyword>
<keyword id="KW-0696">RNA-directed RNA polymerase</keyword>
<keyword id="KW-1143">T=pseudo3 icosahedral capsid protein</keyword>
<keyword id="KW-0788">Thiol protease</keyword>
<keyword id="KW-0808">Transferase</keyword>
<keyword id="KW-0813">Transport</keyword>
<keyword id="KW-1161">Viral attachment to host cell</keyword>
<keyword id="KW-0899">Viral immunoevasion</keyword>
<keyword id="KW-1182">Viral ion channel</keyword>
<keyword id="KW-0693">Viral RNA replication</keyword>
<keyword id="KW-0946">Virion</keyword>
<keyword id="KW-1160">Virus entry into host cell</keyword>
<keyword id="KW-0862">Zinc</keyword>
<keyword id="KW-0863">Zinc-finger</keyword>
<name>POLG_EMCVB</name>
<proteinExistence type="inferred from homology"/>
<dbReference type="EC" id="3.6.4.13"/>
<dbReference type="EC" id="3.4.22.28" evidence="7"/>
<dbReference type="EC" id="2.7.7.48" evidence="11"/>
<dbReference type="EMBL" id="M22457">
    <property type="protein sequence ID" value="AAA43033.1"/>
    <property type="status" value="ALT_SEQ"/>
    <property type="molecule type" value="Genomic_RNA"/>
</dbReference>
<dbReference type="PIR" id="B31473">
    <property type="entry name" value="GNNYEB"/>
</dbReference>
<dbReference type="SMR" id="P17593"/>
<dbReference type="MEROPS" id="C03.009"/>
<dbReference type="Proteomes" id="UP000008661">
    <property type="component" value="Genome"/>
</dbReference>
<dbReference type="GO" id="GO:0044162">
    <property type="term" value="C:host cell cytoplasmic vesicle membrane"/>
    <property type="evidence" value="ECO:0007669"/>
    <property type="project" value="UniProtKB-SubCell"/>
</dbReference>
<dbReference type="GO" id="GO:0044196">
    <property type="term" value="C:host cell nucleolus"/>
    <property type="evidence" value="ECO:0007669"/>
    <property type="project" value="UniProtKB-SubCell"/>
</dbReference>
<dbReference type="GO" id="GO:0016020">
    <property type="term" value="C:membrane"/>
    <property type="evidence" value="ECO:0007669"/>
    <property type="project" value="UniProtKB-KW"/>
</dbReference>
<dbReference type="GO" id="GO:0039618">
    <property type="term" value="C:T=pseudo3 icosahedral viral capsid"/>
    <property type="evidence" value="ECO:0007669"/>
    <property type="project" value="UniProtKB-KW"/>
</dbReference>
<dbReference type="GO" id="GO:0005524">
    <property type="term" value="F:ATP binding"/>
    <property type="evidence" value="ECO:0007669"/>
    <property type="project" value="UniProtKB-KW"/>
</dbReference>
<dbReference type="GO" id="GO:0016887">
    <property type="term" value="F:ATP hydrolysis activity"/>
    <property type="evidence" value="ECO:0007669"/>
    <property type="project" value="RHEA"/>
</dbReference>
<dbReference type="GO" id="GO:0015267">
    <property type="term" value="F:channel activity"/>
    <property type="evidence" value="ECO:0007669"/>
    <property type="project" value="UniProtKB-KW"/>
</dbReference>
<dbReference type="GO" id="GO:0004197">
    <property type="term" value="F:cysteine-type endopeptidase activity"/>
    <property type="evidence" value="ECO:0007669"/>
    <property type="project" value="UniProtKB-EC"/>
</dbReference>
<dbReference type="GO" id="GO:0003723">
    <property type="term" value="F:RNA binding"/>
    <property type="evidence" value="ECO:0007669"/>
    <property type="project" value="UniProtKB-KW"/>
</dbReference>
<dbReference type="GO" id="GO:0003724">
    <property type="term" value="F:RNA helicase activity"/>
    <property type="evidence" value="ECO:0007669"/>
    <property type="project" value="UniProtKB-EC"/>
</dbReference>
<dbReference type="GO" id="GO:0003968">
    <property type="term" value="F:RNA-directed RNA polymerase activity"/>
    <property type="evidence" value="ECO:0007669"/>
    <property type="project" value="UniProtKB-KW"/>
</dbReference>
<dbReference type="GO" id="GO:0005198">
    <property type="term" value="F:structural molecule activity"/>
    <property type="evidence" value="ECO:0007669"/>
    <property type="project" value="InterPro"/>
</dbReference>
<dbReference type="GO" id="GO:0008270">
    <property type="term" value="F:zinc ion binding"/>
    <property type="evidence" value="ECO:0007669"/>
    <property type="project" value="UniProtKB-KW"/>
</dbReference>
<dbReference type="GO" id="GO:0006351">
    <property type="term" value="P:DNA-templated transcription"/>
    <property type="evidence" value="ECO:0007669"/>
    <property type="project" value="InterPro"/>
</dbReference>
<dbReference type="GO" id="GO:0034220">
    <property type="term" value="P:monoatomic ion transmembrane transport"/>
    <property type="evidence" value="ECO:0007669"/>
    <property type="project" value="UniProtKB-KW"/>
</dbReference>
<dbReference type="GO" id="GO:0006508">
    <property type="term" value="P:proteolysis"/>
    <property type="evidence" value="ECO:0007669"/>
    <property type="project" value="UniProtKB-KW"/>
</dbReference>
<dbReference type="GO" id="GO:0046718">
    <property type="term" value="P:symbiont entry into host cell"/>
    <property type="evidence" value="ECO:0007669"/>
    <property type="project" value="UniProtKB-KW"/>
</dbReference>
<dbReference type="GO" id="GO:0039520">
    <property type="term" value="P:symbiont-mediated activation of host autophagy"/>
    <property type="evidence" value="ECO:0000250"/>
    <property type="project" value="UniProtKB"/>
</dbReference>
<dbReference type="GO" id="GO:0039540">
    <property type="term" value="P:symbiont-mediated suppression of host cytoplasmic pattern recognition receptor signaling pathway via inhibition of RIG-I activity"/>
    <property type="evidence" value="ECO:0007669"/>
    <property type="project" value="UniProtKB-KW"/>
</dbReference>
<dbReference type="GO" id="GO:0039522">
    <property type="term" value="P:symbiont-mediated suppression of host mRNA export from nucleus"/>
    <property type="evidence" value="ECO:0007669"/>
    <property type="project" value="UniProtKB-KW"/>
</dbReference>
<dbReference type="GO" id="GO:0039694">
    <property type="term" value="P:viral RNA genome replication"/>
    <property type="evidence" value="ECO:0007669"/>
    <property type="project" value="InterPro"/>
</dbReference>
<dbReference type="GO" id="GO:0019062">
    <property type="term" value="P:virion attachment to host cell"/>
    <property type="evidence" value="ECO:0007669"/>
    <property type="project" value="UniProtKB-KW"/>
</dbReference>
<dbReference type="CDD" id="cd23211">
    <property type="entry name" value="Cardiovirus_RdRp"/>
    <property type="match status" value="1"/>
</dbReference>
<dbReference type="CDD" id="cd00205">
    <property type="entry name" value="rhv_like"/>
    <property type="match status" value="3"/>
</dbReference>
<dbReference type="FunFam" id="1.20.960.20:FF:000002">
    <property type="entry name" value="Genome polyprotein"/>
    <property type="match status" value="1"/>
</dbReference>
<dbReference type="FunFam" id="2.40.10.10:FF:000145">
    <property type="entry name" value="Genome polyprotein"/>
    <property type="match status" value="1"/>
</dbReference>
<dbReference type="FunFam" id="2.60.120.20:FF:000009">
    <property type="entry name" value="Genome polyprotein"/>
    <property type="match status" value="1"/>
</dbReference>
<dbReference type="FunFam" id="2.60.120.20:FF:000013">
    <property type="entry name" value="Genome polyprotein"/>
    <property type="match status" value="1"/>
</dbReference>
<dbReference type="FunFam" id="3.30.70.270:FF:000046">
    <property type="entry name" value="Genome polyprotein"/>
    <property type="match status" value="1"/>
</dbReference>
<dbReference type="FunFam" id="3.30.70.270:FF:000065">
    <property type="entry name" value="Genome polyprotein"/>
    <property type="match status" value="1"/>
</dbReference>
<dbReference type="FunFam" id="4.10.90.10:FF:000002">
    <property type="entry name" value="Genome polyprotein"/>
    <property type="match status" value="1"/>
</dbReference>
<dbReference type="Gene3D" id="1.20.960.20">
    <property type="match status" value="1"/>
</dbReference>
<dbReference type="Gene3D" id="2.60.120.20">
    <property type="match status" value="3"/>
</dbReference>
<dbReference type="Gene3D" id="3.30.70.270">
    <property type="match status" value="2"/>
</dbReference>
<dbReference type="Gene3D" id="4.10.90.10">
    <property type="entry name" value="Capsid protein VP4 superfamily, Picornavirus"/>
    <property type="match status" value="1"/>
</dbReference>
<dbReference type="Gene3D" id="2.40.10.10">
    <property type="entry name" value="Trypsin-like serine proteases"/>
    <property type="match status" value="1"/>
</dbReference>
<dbReference type="InterPro" id="IPR015031">
    <property type="entry name" value="Capsid_VP4_Picornavir"/>
</dbReference>
<dbReference type="InterPro" id="IPR037080">
    <property type="entry name" value="Capsid_VP4_sf_Picornavirus"/>
</dbReference>
<dbReference type="InterPro" id="IPR043502">
    <property type="entry name" value="DNA/RNA_pol_sf"/>
</dbReference>
<dbReference type="InterPro" id="IPR004004">
    <property type="entry name" value="Helic/Pol/Pept_Calicivir-typ"/>
</dbReference>
<dbReference type="InterPro" id="IPR000605">
    <property type="entry name" value="Helicase_SF3_ssDNA/RNA_vir"/>
</dbReference>
<dbReference type="InterPro" id="IPR014759">
    <property type="entry name" value="Helicase_SF3_ssRNA_vir"/>
</dbReference>
<dbReference type="InterPro" id="IPR021573">
    <property type="entry name" value="Leader_pept_picornaV"/>
</dbReference>
<dbReference type="InterPro" id="IPR044067">
    <property type="entry name" value="PCV_3C_PRO"/>
</dbReference>
<dbReference type="InterPro" id="IPR000199">
    <property type="entry name" value="Peptidase_C3A/C3B_picornavir"/>
</dbReference>
<dbReference type="InterPro" id="IPR009003">
    <property type="entry name" value="Peptidase_S1_PA"/>
</dbReference>
<dbReference type="InterPro" id="IPR043504">
    <property type="entry name" value="Peptidase_S1_PA_chymotrypsin"/>
</dbReference>
<dbReference type="InterPro" id="IPR001676">
    <property type="entry name" value="Picornavirus_capsid"/>
</dbReference>
<dbReference type="InterPro" id="IPR043128">
    <property type="entry name" value="Rev_trsase/Diguanyl_cyclase"/>
</dbReference>
<dbReference type="InterPro" id="IPR033703">
    <property type="entry name" value="Rhv-like"/>
</dbReference>
<dbReference type="InterPro" id="IPR001205">
    <property type="entry name" value="RNA-dir_pol_C"/>
</dbReference>
<dbReference type="InterPro" id="IPR007094">
    <property type="entry name" value="RNA-dir_pol_PSvirus"/>
</dbReference>
<dbReference type="InterPro" id="IPR029053">
    <property type="entry name" value="Viral_coat"/>
</dbReference>
<dbReference type="InterPro" id="IPR037243">
    <property type="entry name" value="Viral_lead_polypep_zc_finger"/>
</dbReference>
<dbReference type="Pfam" id="PF00548">
    <property type="entry name" value="Peptidase_C3"/>
    <property type="match status" value="1"/>
</dbReference>
<dbReference type="Pfam" id="PF00680">
    <property type="entry name" value="RdRP_1"/>
    <property type="match status" value="1"/>
</dbReference>
<dbReference type="Pfam" id="PF00073">
    <property type="entry name" value="Rhv"/>
    <property type="match status" value="2"/>
</dbReference>
<dbReference type="Pfam" id="PF22663">
    <property type="entry name" value="Rhv_5"/>
    <property type="match status" value="1"/>
</dbReference>
<dbReference type="Pfam" id="PF00910">
    <property type="entry name" value="RNA_helicase"/>
    <property type="match status" value="1"/>
</dbReference>
<dbReference type="Pfam" id="PF08935">
    <property type="entry name" value="VP4_2"/>
    <property type="match status" value="1"/>
</dbReference>
<dbReference type="Pfam" id="PF11475">
    <property type="entry name" value="VP_N-CPKC"/>
    <property type="match status" value="1"/>
</dbReference>
<dbReference type="PRINTS" id="PR00918">
    <property type="entry name" value="CALICVIRUSNS"/>
</dbReference>
<dbReference type="SUPFAM" id="SSF56672">
    <property type="entry name" value="DNA/RNA polymerases"/>
    <property type="match status" value="1"/>
</dbReference>
<dbReference type="SUPFAM" id="SSF88633">
    <property type="entry name" value="Positive stranded ssRNA viruses"/>
    <property type="match status" value="2"/>
</dbReference>
<dbReference type="SUPFAM" id="SSF50494">
    <property type="entry name" value="Trypsin-like serine proteases"/>
    <property type="match status" value="1"/>
</dbReference>
<dbReference type="SUPFAM" id="SSF144251">
    <property type="entry name" value="Viral leader polypeptide zinc finger"/>
    <property type="match status" value="1"/>
</dbReference>
<dbReference type="PROSITE" id="PS51874">
    <property type="entry name" value="PCV_3C_PRO"/>
    <property type="match status" value="1"/>
</dbReference>
<dbReference type="PROSITE" id="PS50507">
    <property type="entry name" value="RDRP_SSRNA_POS"/>
    <property type="match status" value="1"/>
</dbReference>
<dbReference type="PROSITE" id="PS51218">
    <property type="entry name" value="SF3_HELICASE_2"/>
    <property type="match status" value="1"/>
</dbReference>
<sequence length="2292" mass="255497">MATTMEQEICAHSLTLKGCPKCSALQYRNGFYLLKYDEEWYPEELLTDGEDDVFDPELDMEVVFELQGNSTSSDKNNSSSDGNEGVIINNFYSNQYQNSIDLSANATGSDPPRTYGQFSNLLSGAVNAFSNMIPLLADQNTEEMENLSDRVLQDTAGNTVTNTQSTVGRLVGYGAVHDGEHPASCADTASEKILAVERYYTFKVNDWTSTQKPFEYIRIPLPHVLSGEDGGVFGAALRRHYLVKTGWRVQVQCNASQFHAGSLLVFMAPEYPTLDAFAMDNRWSKDNLPNGTKTQTNRKGPFAMDHQNFWQWTLYPHQFLNLRTNTTVDLEVPYVNIAPTSSWTQHASWTLVIAVVAPLTYSTGASTSLDITASIQPVRPVFNGLRHETLSRQSPIPVTIREHAGTWYSTLPDSTVPIYGKTPVAPANYMVGEYKDFLEIAQIPTFIGNKIPNAVPYIEASNTAVKTQPLATYQVTLSCSCLANTFLAALSRNFAQYRGSLVYTFVFTGTAMMKGKFLIAYTPPGAGKPTSRDQAMQATYAIWDLGLNSSYSFTVPFISPTHFRMVGTDQVNITNVDGWVTVWQLTPLTYPPGCPTSAKILTMVSAGKDFSLKMPISPAPWSPQGVENAERGVTEDTDATADFVAQPVYLPENQTKVAFFYDRSSPIGAFTVKSGSLESGFTPFSNQTCPNSVILTPGPQFDPAYDQLRPQRLTEIWGNGNEETSKVFPLKSKQDYSFCLFSPFVYYKCDLEVTLSPHTSGNHGLLVRWCPTGTPTKPTTQVLHEVSSLSEGRTPQVYSAGPGITNQISFVVPYNSPLSVLPAVWYNGHKRFDNTGSLGIAPNSDFGTLFFAGTKPDIKFTVYLRYKNMRVFCPRPTVFFPWPSSGDKIDMTPRAGVLMLESPNALDISRTYPTLHILIQFNHGGLEIRLFRHGMFWAEAHADVILRSRTKQISFLNNGSFPSMDARAPWNPWKNTYHAVLRAEPYRVTMDVYHKRIRPFRLPLVQKEWNVREENVFGLYGIFNAHYAGYFADLLIHDIETNPGPFMAKPKKQVFQTQGAAVSSMAQTLLPNDLASKVMGSAFTALLDANEDAQKAMRIIKTLSSLSDAWENVKETLNNPEFWKQLLSRCVQLIAGMTIAVMHPDPLTLLCLGTLTAAEITSQTSLCEEIVAKFKKIFTTPPPRFPTISLFQQQSPLKQVNDVFSLAKNLDWAVKTVEKVVDWFGTWVVQEEKEQTLDQLLQRFPEHAKRISDLRNGMSAYVECKESFDFFEKLYNQAVKEKRTGIAAVCEKFRQKHDHATARCEPVVIVLRGDAGQGKSLSSQVIAQAVSKTIFGRQSVYSLPPDSDFFDGYENQFAAIMDDLGQNPDGSDFTTFCQMVSTTNFLPNMASLERNGTPFTSQIVVATTNLPEFRPVTIAHYPAVERRITFDYSVSAGPVCSKTEAGYKVLDVERAFRPTGDAPLPCFQNNCLFLEKAGLQFRDNRTKEILSLVDVIERAVARIERKKKVLTTVQTLVAQAPVDEVSFHSVVQQLKARQEATDEQLEELQEAFAKTQERSSVFSDWMKISAMLCAATLALSQVVKMAKTVKQMVRPDLVRVQLDEQEQGPYNEAVRAKPKTLQLLDIQGPNPVMDFEKYVAKFVTAPIDFVYPTGVSTQTCLLVKGRTLAVNRHMAESDWSSIVVRGVTHARSTVRILAIAKAGKETDVSFIRLSSGPLFRDNTSKFVKADDVLPATSAPVIGIMNTDIPMMFTGTFLKAGVSVPVETGQTFNHCIHYKANTRKGWCGSALLADLGGKKKILGMHSAGSMGRTAASIVSQEMICAVVSAFEPQGALERLPDGPRIHVPRKTALRPTVARRVFQPAYAPAVLSKFDPRTEADVDEVAFSKHTSNQESLPPVFRMVAKEYANRVFTLLGRDNGRLTVKQALEGLEGMDPMDKNTSPGLPYTALGMRRTDVVDWESATLIPYAADRLKKMNEGDFSDIVYQTFLKDELRPVEKVQAAKTRIVDVPPFEHCILGRQLLGRFASKFQTQPGLELGSAIGCDPDVHWTAFGVAMQGFERVYDVDYSNFDSTHSVAMFRLLAEEFFTPENGFDPLVKEYLESLAISTHAFEEKRYLITGGLPSGCAATSMLNTIMNNIIIRAGLYLTYKNFEFDDVKVLSYGDDLLVATNYQLNFDKVRASLAKTGYKITPANKTSTFPLDSTLEDVVFLKRKFKKEGPLYRPVMNREALEAMLSYYRPGTLSEKLTSITMLAVHSGKPEYDRLFAPFREVGVVVPSFESVEYRWRSLFW</sequence>
<comment type="function">
    <molecule>Leader protein</molecule>
    <text evidence="9">Forms a complex with host RAN and probably binds to exportins carrying activated MAPK in order to mediate the hyperphosphorylation of host Phe/Gly containing nuclear pore proteins (Nups) resulting in cessation of active nucleocytoplasmic transport (By similarity). Proteins with NLS signals fail to import, cellular mRNAs fail to export, and some proteins small enough for diffusion are not retained anymore (efflux) (By similarity). The resulting inhibition of cellular protein synthesis serves to ensure maximal viral gene expression and to evade host immune response (By similarity).</text>
</comment>
<comment type="function">
    <molecule>Capsid protein VP1</molecule>
    <text evidence="7">Forms an icosahedral capsid of pseudo T=3 symmetry with capsid proteins VP2 and VP3. Together they form an icosahedral capsid composed of 60 copies of each VP1, VP2, and VP3, with a diameter of approximately 300 Angstroms. VP4 lies on the inner surface of the protein shell formed by VP1, VP2 and VP3. All the three latter proteins contain a beta-sheet structure called beta-barrel jelly roll. VP1 is situated at the 12 fivefold axes, whereas VP2 and VP3 are located at the quasi-sixfold axes.</text>
</comment>
<comment type="function">
    <molecule>Capsid protein VP2</molecule>
    <text evidence="7">Forms an icosahedral capsid of pseudo T=3 symmetry with capsid proteins VP2 and VP3. Together they form an icosahedral capsid composed of 60 copies of each VP1, VP2, and VP3, with a diameter of approximately 300 Angstroms. VP4 lies on the inner surface of the protein shell formed by VP1, VP2 and VP3. All the three latter proteins contain a beta-sheet structure called beta-barrel jelly roll. VP1 is situated at the 12 fivefold axes, whereas VP2 and VP3 are located at the quasi-sixfold axes.</text>
</comment>
<comment type="function">
    <molecule>Capsid protein VP3</molecule>
    <text evidence="7">Forms an icosahedral capsid of pseudo T=3 symmetry with capsid proteins VP2 and VP3. Together they form an icosahedral capsid composed of 60 copies of each VP1, VP2, and VP3, with a diameter of approximately 300 Angstroms. VP4 lies on the inner surface of the protein shell formed by VP1, VP2 and VP3. All the three latter proteins contain a beta-sheet structure called beta-barrel jelly roll. VP1 is situated at the 12 fivefold axes, whereas VP2 and VP3 are located at the quasi-sixfold axes.</text>
</comment>
<comment type="function">
    <molecule>Capsid protein VP4</molecule>
    <text evidence="2 7">Lies on the inner surface of the capsid shell (By similarity). After binding to the host receptor, the capsid undergoes conformational changes (By similarity). Capsid protein VP4 is released, capsid protein VP1 N-terminus is externalized, and together, they shape a pore in the host membrane through which the viral genome is translocated into the host cell cytoplasm (By similarity). After genome has been released, the channel shrinks (By similarity).</text>
</comment>
<comment type="function">
    <molecule>Capsid protein VP0</molecule>
    <text evidence="6">VP0 precursor is a component of immature procapsids.</text>
</comment>
<comment type="function">
    <molecule>Protein 2A</molecule>
    <text evidence="7 9">Involved in host translation shutoff by inhibiting cap-dependent mRNA translation (By similarity). Nuclear localization is required for this function (By similarity). The resulting inhibition of cellular protein synthesis serves to ensure maximal viral gene expression and to evade host immune response (By similarity). Inhibits the phosphorylation of the leader protein (By similarity). Binds to the RNA stem-loop essential for the ribosomal frameshift event and trans-activates the production of protein 2B* (By similarity).</text>
</comment>
<comment type="function">
    <molecule>Protein 2B</molecule>
    <text evidence="1">Affects membrane integrity and causes an increase in membrane permeability.</text>
</comment>
<comment type="function">
    <molecule>Protein 2C</molecule>
    <text evidence="3 4 5">Associates with and induces structural rearrangements of intracellular membranes (By similarity). It displays RNA-binding, nucleotide binding and NTPase activities (By similarity). Interacts with IFIH1/MDA5 to inhibit the induction of the IFN-beta signal pathway (By similarity).</text>
</comment>
<comment type="function">
    <molecule>Protein 3A</molecule>
    <text evidence="1">Serves as membrane anchor via its hydrophobic domain.</text>
</comment>
<comment type="function">
    <molecule>VPg</molecule>
    <text evidence="3">Forms a primer, VPg-pU, which is utilized by the polymerase for the initiation of RNA chains.</text>
</comment>
<comment type="function">
    <molecule>Protease 3C</molecule>
    <text evidence="3 7">Cysteine protease that generates mature viral proteins from the precursor polyprotein (By similarity). In addition to its proteolytic activity, it binds to viral RNA, and thus influences viral genome replication. RNA and substrate cooperatively bind to the protease. Cleaves host PABP1, this cleavage is important for viral replication (By similarity). Cleaves host TANK and disrupts the TANK-TBK1-IKKepsilon-IRF3 complex, thereby inhibiting the induction of the IFN-beta signal pathway (By similarity).</text>
</comment>
<comment type="function">
    <molecule>RNA-directed RNA polymerase</molecule>
    <text evidence="7">Replicates the genomic and antigenomic RNAs by recognizing replications specific signals (By similarity). Performs VPg uridylylation (By similarity).</text>
</comment>
<comment type="catalytic activity">
    <reaction evidence="11">
        <text>RNA(n) + a ribonucleoside 5'-triphosphate = RNA(n+1) + diphosphate</text>
        <dbReference type="Rhea" id="RHEA:21248"/>
        <dbReference type="Rhea" id="RHEA-COMP:14527"/>
        <dbReference type="Rhea" id="RHEA-COMP:17342"/>
        <dbReference type="ChEBI" id="CHEBI:33019"/>
        <dbReference type="ChEBI" id="CHEBI:61557"/>
        <dbReference type="ChEBI" id="CHEBI:140395"/>
        <dbReference type="EC" id="2.7.7.48"/>
    </reaction>
</comment>
<comment type="catalytic activity">
    <reaction evidence="14">
        <text>ATP + H2O = ADP + phosphate + H(+)</text>
        <dbReference type="Rhea" id="RHEA:13065"/>
        <dbReference type="ChEBI" id="CHEBI:15377"/>
        <dbReference type="ChEBI" id="CHEBI:15378"/>
        <dbReference type="ChEBI" id="CHEBI:30616"/>
        <dbReference type="ChEBI" id="CHEBI:43474"/>
        <dbReference type="ChEBI" id="CHEBI:456216"/>
        <dbReference type="EC" id="3.6.4.13"/>
    </reaction>
</comment>
<comment type="catalytic activity">
    <reaction evidence="13">
        <text>Selective cleavage of Gln-|-Gly bond in the poliovirus polyprotein. In other picornavirus reactions Glu may be substituted for Gln, and Ser or Thr for Gly.</text>
        <dbReference type="EC" id="3.4.22.28"/>
    </reaction>
</comment>
<comment type="subunit">
    <molecule>Protease 3C</molecule>
    <text evidence="3 9">Interacts with host TRIM22; this interaction leads to the ubiquitination of protease 3C and may restrict the virus replication (By similarity).</text>
</comment>
<comment type="subunit">
    <molecule>Protein 2A</molecule>
    <text evidence="3 9">Interacts with host EIF4E (By similarity). Interacts with the leader protein (By similarity).</text>
</comment>
<comment type="subunit">
    <molecule>Leader protein</molecule>
    <text evidence="3 9">Interacts with host RAN; the complex L-RAN recruits cellular kinases responsible for the L-induced nucleocytoplasmic trafficking inhibition (By similarity). The complex L-RAN can further bind to the host exportins XPO1/CRM1 and CSE1L/CAS (By similarity). Interacts with the protein 2A (By similarity).</text>
</comment>
<comment type="subunit">
    <molecule>Protein 2C</molecule>
    <text evidence="3 9">Interacts with host IFIH1/MDA5; this interaction inhibits the induction of the IFN-beta signal pathway (By similarity).</text>
</comment>
<comment type="subcellular location">
    <molecule>Capsid protein VP2</molecule>
    <subcellularLocation>
        <location evidence="7">Virion</location>
    </subcellularLocation>
    <subcellularLocation>
        <location evidence="14">Host cytoplasm</location>
    </subcellularLocation>
</comment>
<comment type="subcellular location">
    <molecule>Capsid protein VP3</molecule>
    <subcellularLocation>
        <location evidence="7">Virion</location>
    </subcellularLocation>
    <subcellularLocation>
        <location evidence="14">Host cytoplasm</location>
    </subcellularLocation>
</comment>
<comment type="subcellular location">
    <molecule>Capsid protein VP1</molecule>
    <subcellularLocation>
        <location evidence="7">Virion</location>
    </subcellularLocation>
    <subcellularLocation>
        <location evidence="14">Host cytoplasm</location>
    </subcellularLocation>
</comment>
<comment type="subcellular location">
    <molecule>Protein 2A</molecule>
    <subcellularLocation>
        <location evidence="9">Host nucleus</location>
        <location evidence="9">Host nucleolus</location>
    </subcellularLocation>
</comment>
<comment type="subcellular location">
    <molecule>Protein 2B</molecule>
    <subcellularLocation>
        <location evidence="14">Host cytoplasmic vesicle membrane</location>
        <topology evidence="14">Peripheral membrane protein</topology>
        <orientation evidence="14">Cytoplasmic side</orientation>
    </subcellularLocation>
    <text evidence="14">Probably localizes to the surface of intracellular membrane vesicles that are induced after virus infection as the site for viral RNA replication. These vesicles are probably autophagosome-like vesicles.</text>
</comment>
<comment type="subcellular location">
    <molecule>Protein 2C</molecule>
    <subcellularLocation>
        <location evidence="14">Host cytoplasmic vesicle membrane</location>
        <topology evidence="14">Peripheral membrane protein</topology>
        <orientation evidence="14">Cytoplasmic side</orientation>
    </subcellularLocation>
    <text evidence="14">Probably localizes to the surface of intracellular membrane vesicles that are induced after virus infection as the site for viral RNA replication. These vesicles are probably autophagosome-like vesicles.</text>
</comment>
<comment type="subcellular location">
    <molecule>Protein 3A</molecule>
    <subcellularLocation>
        <location evidence="3">Host cytoplasmic vesicle membrane</location>
        <topology evidence="14">Peripheral membrane protein</topology>
        <orientation evidence="14">Cytoplasmic side</orientation>
    </subcellularLocation>
    <text evidence="3">Probably localizes to the surface of intracellular membrane vesicles that are induced after virus infection as the site for viral RNA replication. These vesicles are probably autophagosome-like vesicles.</text>
</comment>
<comment type="subcellular location">
    <molecule>VPg</molecule>
    <subcellularLocation>
        <location evidence="14">Virion</location>
    </subcellularLocation>
</comment>
<comment type="subcellular location">
    <molecule>Protease 3C</molecule>
    <subcellularLocation>
        <location evidence="14">Host cytoplasm</location>
    </subcellularLocation>
</comment>
<comment type="subcellular location">
    <molecule>RNA-directed RNA polymerase</molecule>
    <subcellularLocation>
        <location evidence="14">Host cytoplasmic vesicle membrane</location>
        <topology evidence="14">Peripheral membrane protein</topology>
        <orientation evidence="14">Cytoplasmic side</orientation>
    </subcellularLocation>
    <text evidence="14">Probably localizes to the surface of intracellular membrane vesicles that are induced after virus infection as the site for viral RNA replication. These vesicles are probably autophagosome-like vesicles.</text>
</comment>
<comment type="PTM">
    <molecule>Leader protein</molecule>
    <text evidence="9">Phosphorylated.</text>
</comment>
<comment type="PTM">
    <molecule>Genome polyprotein</molecule>
    <text evidence="3">Specific enzymatic cleavages by the viral protease in vivo yield a variety of precursors and mature proteins (By similarity). The polyprotein seems to be cotranslationally cleaved at the 2A/2B junction by a ribosomal skip from one codon to the next without formation of a peptide bond (By similarity). This process would release the P1-2A peptide from the translational complex (By similarity).</text>
</comment>
<comment type="PTM">
    <molecule>Capsid protein VP0</molecule>
    <text evidence="2">During virion maturation, immature virions are rendered infectious following cleavage of VP0 into VP4 and VP2. This maturation seems to be an autocatalytic event triggered by the presence of RNA in the capsid and is followed by a conformational change of the particle.</text>
</comment>
<comment type="PTM">
    <molecule>VPg</molecule>
    <text evidence="7">Uridylylated by the polymerase and is covalently linked to the 5'-end of genomic RNA. This uridylylated form acts as a nucleotide-peptide primer for the polymerase.</text>
</comment>
<comment type="PTM">
    <molecule>Capsid protein VP4</molecule>
    <text evidence="8">Myristoylation is required during RNA encapsidation and formation of the mature virus particle.</text>
</comment>
<comment type="similarity">
    <text evidence="14">Belongs to the picornaviruses polyprotein family.</text>
</comment>
<organismHost>
    <name type="scientific">Homo sapiens</name>
    <name type="common">Human</name>
    <dbReference type="NCBI Taxonomy" id="9606"/>
</organismHost>
<organismHost>
    <name type="scientific">Mus musculus</name>
    <name type="common">Mouse</name>
    <dbReference type="NCBI Taxonomy" id="10090"/>
</organismHost>
<organismHost>
    <name type="scientific">Sigmodon hispidus</name>
    <name type="common">Hispid cotton rat</name>
    <dbReference type="NCBI Taxonomy" id="42415"/>
</organismHost>
<organismHost>
    <name type="scientific">Sus scrofa</name>
    <name type="common">Pig</name>
    <dbReference type="NCBI Taxonomy" id="9823"/>
</organismHost>
<feature type="chain" id="PRO_0000446094" description="Genome polyprotein">
    <location>
        <begin position="1"/>
        <end position="2292"/>
    </location>
</feature>
<feature type="chain" id="PRO_0000039792" description="Leader protein">
    <location>
        <begin position="1"/>
        <end position="67"/>
    </location>
</feature>
<feature type="chain" id="PRO_0000310968" description="Capsid protein VP0">
    <location>
        <begin position="68"/>
        <end position="393"/>
    </location>
</feature>
<feature type="chain" id="PRO_0000039793" description="Capsid protein VP4">
    <location>
        <begin position="68"/>
        <end position="137"/>
    </location>
</feature>
<feature type="chain" id="PRO_0000039794" description="Capsid protein VP2">
    <location>
        <begin position="138"/>
        <end position="393"/>
    </location>
</feature>
<feature type="chain" id="PRO_0000039795" description="Capsid protein VP3">
    <location>
        <begin position="394"/>
        <end position="624"/>
    </location>
</feature>
<feature type="chain" id="PRO_0000039796" description="Capsid protein VP1">
    <location>
        <begin position="625"/>
        <end position="901"/>
    </location>
</feature>
<feature type="chain" id="PRO_0000039797" description="Protein 2A">
    <location>
        <begin position="902"/>
        <end position="1044"/>
    </location>
</feature>
<feature type="chain" id="PRO_0000039798" description="Protein 2B">
    <location>
        <begin position="1045"/>
        <end position="1194"/>
    </location>
</feature>
<feature type="chain" id="PRO_0000039799" description="Protein 2C">
    <location>
        <begin position="1195"/>
        <end position="1519"/>
    </location>
</feature>
<feature type="chain" id="PRO_0000039800" description="Protein 3A">
    <location>
        <begin position="1520"/>
        <end position="1607"/>
    </location>
</feature>
<feature type="chain" id="PRO_0000039801" description="VPg">
    <location>
        <begin position="1608"/>
        <end position="1627"/>
    </location>
</feature>
<feature type="chain" id="PRO_0000039802" description="Protease 3C">
    <location>
        <begin position="1628"/>
        <end position="1832"/>
    </location>
</feature>
<feature type="chain" id="PRO_0000039803" description="RNA-directed RNA polymerase">
    <location>
        <begin position="1833"/>
        <end position="2292"/>
    </location>
</feature>
<feature type="domain" description="SF3 helicase" evidence="12">
    <location>
        <begin position="1281"/>
        <end position="1447"/>
    </location>
</feature>
<feature type="domain" description="Peptidase C3" evidence="13">
    <location>
        <begin position="1630"/>
        <end position="1822"/>
    </location>
</feature>
<feature type="domain" description="RdRp catalytic" evidence="11">
    <location>
        <begin position="2061"/>
        <end position="2179"/>
    </location>
</feature>
<feature type="zinc finger region" evidence="7">
    <location>
        <begin position="10"/>
        <end position="22"/>
    </location>
</feature>
<feature type="region of interest" description="Acidic" evidence="14">
    <location>
        <begin position="37"/>
        <end position="61"/>
    </location>
</feature>
<feature type="region of interest" description="Host EIF4E binding" evidence="9">
    <location>
        <begin position="1030"/>
        <end position="1036"/>
    </location>
</feature>
<feature type="short sequence motif" description="Nuclear localization signal" evidence="9">
    <location>
        <begin position="995"/>
        <end position="1003"/>
    </location>
</feature>
<feature type="active site" description="For protease 3C activity" evidence="13">
    <location>
        <position position="1673"/>
    </location>
</feature>
<feature type="active site" description="For protease 3C activity" evidence="13">
    <location>
        <position position="1707"/>
    </location>
</feature>
<feature type="active site" description="For protease 3C activity" evidence="13">
    <location>
        <position position="1786"/>
    </location>
</feature>
<feature type="active site" description="For RdRp activity" evidence="7">
    <location>
        <position position="2067"/>
    </location>
</feature>
<feature type="active site" description="For RdRp activity" evidence="7">
    <location>
        <position position="2165"/>
    </location>
</feature>
<feature type="binding site" evidence="7">
    <location>
        <position position="22"/>
    </location>
    <ligand>
        <name>RNA</name>
        <dbReference type="ChEBI" id="CHEBI:33697"/>
    </ligand>
</feature>
<feature type="binding site" evidence="7">
    <location>
        <position position="46"/>
    </location>
    <ligand>
        <name>RNA</name>
        <dbReference type="ChEBI" id="CHEBI:33697"/>
    </ligand>
</feature>
<feature type="binding site" evidence="7">
    <location>
        <position position="47"/>
    </location>
    <ligand>
        <name>RNA</name>
        <dbReference type="ChEBI" id="CHEBI:33697"/>
    </ligand>
</feature>
<feature type="binding site" evidence="7">
    <location>
        <position position="48"/>
    </location>
    <ligand>
        <name>RNA</name>
        <dbReference type="ChEBI" id="CHEBI:33697"/>
    </ligand>
</feature>
<feature type="binding site" evidence="7">
    <location>
        <position position="49"/>
    </location>
    <ligand>
        <name>RNA</name>
        <dbReference type="ChEBI" id="CHEBI:33697"/>
    </ligand>
</feature>
<feature type="binding site" evidence="7">
    <location>
        <position position="50"/>
    </location>
    <ligand>
        <name>RNA</name>
        <dbReference type="ChEBI" id="CHEBI:33697"/>
    </ligand>
</feature>
<feature type="binding site" evidence="7">
    <location>
        <position position="69"/>
    </location>
    <ligand>
        <name>RNA</name>
        <dbReference type="ChEBI" id="CHEBI:33697"/>
    </ligand>
</feature>
<feature type="binding site" evidence="7">
    <location>
        <position position="70"/>
    </location>
    <ligand>
        <name>RNA</name>
        <dbReference type="ChEBI" id="CHEBI:33697"/>
    </ligand>
</feature>
<feature type="binding site" evidence="7">
    <location>
        <position position="93"/>
    </location>
    <ligand>
        <name>RNA</name>
        <dbReference type="ChEBI" id="CHEBI:33697"/>
    </ligand>
</feature>
<feature type="binding site" evidence="7">
    <location>
        <position position="95"/>
    </location>
    <ligand>
        <name>RNA</name>
        <dbReference type="ChEBI" id="CHEBI:33697"/>
    </ligand>
</feature>
<feature type="binding site" evidence="7">
    <location>
        <position position="97"/>
    </location>
    <ligand>
        <name>RNA</name>
        <dbReference type="ChEBI" id="CHEBI:33697"/>
    </ligand>
</feature>
<feature type="binding site" evidence="7">
    <location>
        <position position="100"/>
    </location>
    <ligand>
        <name>RNA</name>
        <dbReference type="ChEBI" id="CHEBI:33697"/>
    </ligand>
</feature>
<feature type="binding site" evidence="12">
    <location>
        <begin position="1313"/>
        <end position="1320"/>
    </location>
    <ligand>
        <name>ATP</name>
        <dbReference type="ChEBI" id="CHEBI:30616"/>
    </ligand>
</feature>
<feature type="site" description="Cleavage" evidence="10">
    <location>
        <begin position="137"/>
        <end position="138"/>
    </location>
</feature>
<feature type="site" description="Cleavage; by protease 3C" evidence="3">
    <location>
        <begin position="393"/>
        <end position="394"/>
    </location>
</feature>
<feature type="site" description="Cleavage; by protease 3C" evidence="3">
    <location>
        <begin position="624"/>
        <end position="625"/>
    </location>
</feature>
<feature type="site" description="Cleavage; by protease 3C" evidence="3">
    <location>
        <begin position="901"/>
        <end position="902"/>
    </location>
</feature>
<feature type="site" description="Cleavage; by ribosomal skip" evidence="3">
    <location>
        <begin position="1044"/>
        <end position="1045"/>
    </location>
</feature>
<feature type="site" description="Cleavage; by protease 3C" evidence="3">
    <location>
        <begin position="1194"/>
        <end position="1195"/>
    </location>
</feature>
<feature type="site" description="Cleavage; by protease 3C" evidence="3">
    <location>
        <begin position="1519"/>
        <end position="1520"/>
    </location>
</feature>
<feature type="site" description="Cleavage; by protease 3C" evidence="3">
    <location>
        <begin position="1607"/>
        <end position="1608"/>
    </location>
</feature>
<feature type="site" description="Cleavage; by protease 3C" evidence="3">
    <location>
        <begin position="1627"/>
        <end position="1628"/>
    </location>
</feature>
<feature type="site" description="Cleavage; by protease 3C" evidence="3">
    <location>
        <begin position="1832"/>
        <end position="1833"/>
    </location>
</feature>
<feature type="modified residue" description="Phosphotyrosine; by host SYK" evidence="9">
    <location>
        <position position="41"/>
    </location>
</feature>
<feature type="modified residue" description="Phosphothreonine; by host CK2" evidence="9">
    <location>
        <position position="47"/>
    </location>
</feature>
<feature type="modified residue" description="O-(5'-phospho-RNA)-tyrosine" evidence="2">
    <location>
        <position position="1610"/>
    </location>
</feature>
<feature type="lipid moiety-binding region" description="N-myristoyl glycine; by host" evidence="8">
    <location>
        <position position="68"/>
    </location>
</feature>
<organism>
    <name type="scientific">Encephalomyocarditis virus (strain emc-b nondiabetogenic)</name>
    <dbReference type="NCBI Taxonomy" id="12105"/>
    <lineage>
        <taxon>Viruses</taxon>
        <taxon>Riboviria</taxon>
        <taxon>Orthornavirae</taxon>
        <taxon>Pisuviricota</taxon>
        <taxon>Pisoniviricetes</taxon>
        <taxon>Picornavirales</taxon>
        <taxon>Picornaviridae</taxon>
        <taxon>Caphthovirinae</taxon>
        <taxon>Cardiovirus</taxon>
        <taxon>Cardiovirus A</taxon>
    </lineage>
</organism>